<organism>
    <name type="scientific">Salmonella agona (strain SL483)</name>
    <dbReference type="NCBI Taxonomy" id="454166"/>
    <lineage>
        <taxon>Bacteria</taxon>
        <taxon>Pseudomonadati</taxon>
        <taxon>Pseudomonadota</taxon>
        <taxon>Gammaproteobacteria</taxon>
        <taxon>Enterobacterales</taxon>
        <taxon>Enterobacteriaceae</taxon>
        <taxon>Salmonella</taxon>
    </lineage>
</organism>
<reference key="1">
    <citation type="journal article" date="2011" name="J. Bacteriol.">
        <title>Comparative genomics of 28 Salmonella enterica isolates: evidence for CRISPR-mediated adaptive sublineage evolution.</title>
        <authorList>
            <person name="Fricke W.F."/>
            <person name="Mammel M.K."/>
            <person name="McDermott P.F."/>
            <person name="Tartera C."/>
            <person name="White D.G."/>
            <person name="Leclerc J.E."/>
            <person name="Ravel J."/>
            <person name="Cebula T.A."/>
        </authorList>
    </citation>
    <scope>NUCLEOTIDE SEQUENCE [LARGE SCALE GENOMIC DNA]</scope>
    <source>
        <strain>SL483</strain>
    </source>
</reference>
<keyword id="KW-0687">Ribonucleoprotein</keyword>
<keyword id="KW-0689">Ribosomal protein</keyword>
<sequence length="82" mass="9235">MVTIRLARHGAKKRPFYQVVVTDSRNARNGRFIERVGFFNPIASEKEEGTRLDLDRIAHWVGQGATISDRVAALIKEVKKAA</sequence>
<proteinExistence type="inferred from homology"/>
<accession>B5F289</accession>
<comment type="similarity">
    <text evidence="1">Belongs to the bacterial ribosomal protein bS16 family.</text>
</comment>
<dbReference type="EMBL" id="CP001138">
    <property type="protein sequence ID" value="ACH51492.1"/>
    <property type="molecule type" value="Genomic_DNA"/>
</dbReference>
<dbReference type="RefSeq" id="WP_000256453.1">
    <property type="nucleotide sequence ID" value="NC_011149.1"/>
</dbReference>
<dbReference type="SMR" id="B5F289"/>
<dbReference type="KEGG" id="sea:SeAg_B2821"/>
<dbReference type="HOGENOM" id="CLU_100590_5_1_6"/>
<dbReference type="Proteomes" id="UP000008819">
    <property type="component" value="Chromosome"/>
</dbReference>
<dbReference type="GO" id="GO:0005737">
    <property type="term" value="C:cytoplasm"/>
    <property type="evidence" value="ECO:0007669"/>
    <property type="project" value="UniProtKB-ARBA"/>
</dbReference>
<dbReference type="GO" id="GO:0015935">
    <property type="term" value="C:small ribosomal subunit"/>
    <property type="evidence" value="ECO:0007669"/>
    <property type="project" value="TreeGrafter"/>
</dbReference>
<dbReference type="GO" id="GO:0003735">
    <property type="term" value="F:structural constituent of ribosome"/>
    <property type="evidence" value="ECO:0007669"/>
    <property type="project" value="InterPro"/>
</dbReference>
<dbReference type="GO" id="GO:0006412">
    <property type="term" value="P:translation"/>
    <property type="evidence" value="ECO:0007669"/>
    <property type="project" value="UniProtKB-UniRule"/>
</dbReference>
<dbReference type="FunFam" id="3.30.1320.10:FF:000001">
    <property type="entry name" value="30S ribosomal protein S16"/>
    <property type="match status" value="1"/>
</dbReference>
<dbReference type="Gene3D" id="3.30.1320.10">
    <property type="match status" value="1"/>
</dbReference>
<dbReference type="HAMAP" id="MF_00385">
    <property type="entry name" value="Ribosomal_bS16"/>
    <property type="match status" value="1"/>
</dbReference>
<dbReference type="InterPro" id="IPR000307">
    <property type="entry name" value="Ribosomal_bS16"/>
</dbReference>
<dbReference type="InterPro" id="IPR020592">
    <property type="entry name" value="Ribosomal_bS16_CS"/>
</dbReference>
<dbReference type="InterPro" id="IPR023803">
    <property type="entry name" value="Ribosomal_bS16_dom_sf"/>
</dbReference>
<dbReference type="NCBIfam" id="TIGR00002">
    <property type="entry name" value="S16"/>
    <property type="match status" value="1"/>
</dbReference>
<dbReference type="PANTHER" id="PTHR12919">
    <property type="entry name" value="30S RIBOSOMAL PROTEIN S16"/>
    <property type="match status" value="1"/>
</dbReference>
<dbReference type="PANTHER" id="PTHR12919:SF20">
    <property type="entry name" value="SMALL RIBOSOMAL SUBUNIT PROTEIN BS16M"/>
    <property type="match status" value="1"/>
</dbReference>
<dbReference type="Pfam" id="PF00886">
    <property type="entry name" value="Ribosomal_S16"/>
    <property type="match status" value="1"/>
</dbReference>
<dbReference type="SUPFAM" id="SSF54565">
    <property type="entry name" value="Ribosomal protein S16"/>
    <property type="match status" value="1"/>
</dbReference>
<dbReference type="PROSITE" id="PS00732">
    <property type="entry name" value="RIBOSOMAL_S16"/>
    <property type="match status" value="1"/>
</dbReference>
<gene>
    <name evidence="1" type="primary">rpsP</name>
    <name type="ordered locus">SeAg_B2821</name>
</gene>
<feature type="chain" id="PRO_1000196465" description="Small ribosomal subunit protein bS16">
    <location>
        <begin position="1"/>
        <end position="82"/>
    </location>
</feature>
<evidence type="ECO:0000255" key="1">
    <source>
        <dbReference type="HAMAP-Rule" id="MF_00385"/>
    </source>
</evidence>
<evidence type="ECO:0000305" key="2"/>
<name>RS16_SALA4</name>
<protein>
    <recommendedName>
        <fullName evidence="1">Small ribosomal subunit protein bS16</fullName>
    </recommendedName>
    <alternativeName>
        <fullName evidence="2">30S ribosomal protein S16</fullName>
    </alternativeName>
</protein>